<feature type="chain" id="PRO_0000276941" description="Small ribosomal subunit protein bS16c">
    <location>
        <begin position="1"/>
        <end position="88"/>
    </location>
</feature>
<protein>
    <recommendedName>
        <fullName evidence="1">Small ribosomal subunit protein bS16c</fullName>
    </recommendedName>
    <alternativeName>
        <fullName evidence="2">30S ribosomal protein S16, chloroplastic</fullName>
    </alternativeName>
</protein>
<dbReference type="EMBL" id="EF044213">
    <property type="protein sequence ID" value="ABJ89661.1"/>
    <property type="molecule type" value="Genomic_DNA"/>
</dbReference>
<dbReference type="RefSeq" id="YP_817464.1">
    <property type="nucleotide sequence ID" value="NC_008535.1"/>
</dbReference>
<dbReference type="SMR" id="A0A317"/>
<dbReference type="GeneID" id="4421804"/>
<dbReference type="OrthoDB" id="407221at2759"/>
<dbReference type="Proteomes" id="UP000515148">
    <property type="component" value="Chloroplast Pltd"/>
</dbReference>
<dbReference type="GO" id="GO:0009507">
    <property type="term" value="C:chloroplast"/>
    <property type="evidence" value="ECO:0007669"/>
    <property type="project" value="UniProtKB-SubCell"/>
</dbReference>
<dbReference type="GO" id="GO:0005739">
    <property type="term" value="C:mitochondrion"/>
    <property type="evidence" value="ECO:0007669"/>
    <property type="project" value="GOC"/>
</dbReference>
<dbReference type="GO" id="GO:0015935">
    <property type="term" value="C:small ribosomal subunit"/>
    <property type="evidence" value="ECO:0007669"/>
    <property type="project" value="TreeGrafter"/>
</dbReference>
<dbReference type="GO" id="GO:0003735">
    <property type="term" value="F:structural constituent of ribosome"/>
    <property type="evidence" value="ECO:0007669"/>
    <property type="project" value="InterPro"/>
</dbReference>
<dbReference type="GO" id="GO:0032543">
    <property type="term" value="P:mitochondrial translation"/>
    <property type="evidence" value="ECO:0007669"/>
    <property type="project" value="TreeGrafter"/>
</dbReference>
<dbReference type="FunFam" id="3.30.1320.10:FF:000003">
    <property type="entry name" value="30S ribosomal protein S16, chloroplastic"/>
    <property type="match status" value="1"/>
</dbReference>
<dbReference type="Gene3D" id="3.30.1320.10">
    <property type="match status" value="1"/>
</dbReference>
<dbReference type="HAMAP" id="MF_00385">
    <property type="entry name" value="Ribosomal_bS16"/>
    <property type="match status" value="1"/>
</dbReference>
<dbReference type="InterPro" id="IPR000307">
    <property type="entry name" value="Ribosomal_bS16"/>
</dbReference>
<dbReference type="InterPro" id="IPR020592">
    <property type="entry name" value="Ribosomal_bS16_CS"/>
</dbReference>
<dbReference type="InterPro" id="IPR023803">
    <property type="entry name" value="Ribosomal_bS16_dom_sf"/>
</dbReference>
<dbReference type="NCBIfam" id="TIGR00002">
    <property type="entry name" value="S16"/>
    <property type="match status" value="1"/>
</dbReference>
<dbReference type="PANTHER" id="PTHR12919">
    <property type="entry name" value="30S RIBOSOMAL PROTEIN S16"/>
    <property type="match status" value="1"/>
</dbReference>
<dbReference type="PANTHER" id="PTHR12919:SF20">
    <property type="entry name" value="SMALL RIBOSOMAL SUBUNIT PROTEIN BS16M"/>
    <property type="match status" value="1"/>
</dbReference>
<dbReference type="Pfam" id="PF00886">
    <property type="entry name" value="Ribosomal_S16"/>
    <property type="match status" value="1"/>
</dbReference>
<dbReference type="SUPFAM" id="SSF54565">
    <property type="entry name" value="Ribosomal protein S16"/>
    <property type="match status" value="1"/>
</dbReference>
<dbReference type="PROSITE" id="PS00732">
    <property type="entry name" value="RIBOSOMAL_S16"/>
    <property type="match status" value="1"/>
</dbReference>
<name>RR16_COFAR</name>
<gene>
    <name evidence="1" type="primary">rps16</name>
</gene>
<keyword id="KW-0150">Chloroplast</keyword>
<keyword id="KW-0934">Plastid</keyword>
<keyword id="KW-1185">Reference proteome</keyword>
<keyword id="KW-0687">Ribonucleoprotein</keyword>
<keyword id="KW-0689">Ribosomal protein</keyword>
<sequence length="88" mass="10290">MLKLRLKRCGRKQRAVFRIVAIDVRSRREGKDLQKVGFYDPIKNQTYLNVTAILYFLEQGAQPTGTVQDIFKKAGVFKELRPNQMKFN</sequence>
<proteinExistence type="inferred from homology"/>
<comment type="subcellular location">
    <subcellularLocation>
        <location>Plastid</location>
        <location>Chloroplast</location>
    </subcellularLocation>
</comment>
<comment type="similarity">
    <text evidence="1">Belongs to the bacterial ribosomal protein bS16 family.</text>
</comment>
<organism>
    <name type="scientific">Coffea arabica</name>
    <name type="common">Arabian coffee</name>
    <dbReference type="NCBI Taxonomy" id="13443"/>
    <lineage>
        <taxon>Eukaryota</taxon>
        <taxon>Viridiplantae</taxon>
        <taxon>Streptophyta</taxon>
        <taxon>Embryophyta</taxon>
        <taxon>Tracheophyta</taxon>
        <taxon>Spermatophyta</taxon>
        <taxon>Magnoliopsida</taxon>
        <taxon>eudicotyledons</taxon>
        <taxon>Gunneridae</taxon>
        <taxon>Pentapetalae</taxon>
        <taxon>asterids</taxon>
        <taxon>lamiids</taxon>
        <taxon>Gentianales</taxon>
        <taxon>Rubiaceae</taxon>
        <taxon>Ixoroideae</taxon>
        <taxon>Gardenieae complex</taxon>
        <taxon>Bertiereae - Coffeeae clade</taxon>
        <taxon>Coffeeae</taxon>
        <taxon>Coffea</taxon>
    </lineage>
</organism>
<reference key="1">
    <citation type="journal article" date="2007" name="Plant Biotechnol. J.">
        <title>The complete nucleotide sequence of the coffee (Coffea arabica L.) chloroplast genome: organization and implications for biotechnology and phylogenetic relationships amongst angiosperms.</title>
        <authorList>
            <person name="Samson N."/>
            <person name="Bausher M.G."/>
            <person name="Lee S.-B."/>
            <person name="Jansen R.K."/>
            <person name="Daniell H."/>
        </authorList>
    </citation>
    <scope>NUCLEOTIDE SEQUENCE [LARGE SCALE GENOMIC DNA]</scope>
</reference>
<evidence type="ECO:0000255" key="1">
    <source>
        <dbReference type="HAMAP-Rule" id="MF_00385"/>
    </source>
</evidence>
<evidence type="ECO:0000305" key="2"/>
<accession>A0A317</accession>
<geneLocation type="chloroplast"/>